<name>CDIA_YERPE</name>
<feature type="chain" id="PRO_0000432091" description="Toxin CdiA">
    <location>
        <begin position="1"/>
        <end position="3295"/>
    </location>
</feature>
<feature type="transmembrane region" description="Helical" evidence="3">
    <location>
        <begin position="55"/>
        <end position="75"/>
    </location>
</feature>
<feature type="region of interest" description="Two-partner system transport domain (TPS)" evidence="2">
    <location>
        <begin position="33"/>
        <end position="366"/>
    </location>
</feature>
<feature type="region of interest" description="FHA-1" evidence="7">
    <location>
        <begin position="353"/>
        <end position="1574"/>
    </location>
</feature>
<feature type="region of interest" description="Disordered" evidence="4">
    <location>
        <begin position="1165"/>
        <end position="1185"/>
    </location>
</feature>
<feature type="region of interest" description="Receptor binding domain (RBD)" evidence="1">
    <location>
        <begin position="1575"/>
        <end position="1796"/>
    </location>
</feature>
<feature type="region of interest" description="YP domain" evidence="2">
    <location>
        <begin position="1797"/>
        <end position="1977"/>
    </location>
</feature>
<feature type="region of interest" description="Disordered" evidence="4">
    <location>
        <begin position="1806"/>
        <end position="1831"/>
    </location>
</feature>
<feature type="region of interest" description="Periplasmic FHA-1 repeat (pFR)" evidence="7">
    <location>
        <begin position="1998"/>
        <end position="2035"/>
    </location>
</feature>
<feature type="region of interest" description="FHA-2" evidence="7">
    <location>
        <begin position="2022"/>
        <end position="2676"/>
    </location>
</feature>
<feature type="region of interest" description="Disordered" evidence="4">
    <location>
        <begin position="2260"/>
        <end position="2292"/>
    </location>
</feature>
<feature type="region of interest" description="Disordered" evidence="4">
    <location>
        <begin position="2823"/>
        <end position="2847"/>
    </location>
</feature>
<feature type="region of interest" description="CT domain" evidence="8">
    <location>
        <begin position="3073"/>
        <end position="3295"/>
    </location>
</feature>
<feature type="region of interest" description="Disordered" evidence="4">
    <location>
        <begin position="3276"/>
        <end position="3295"/>
    </location>
</feature>
<feature type="short sequence motif" description="VENN CT cleavage motif" evidence="7">
    <location>
        <begin position="3073"/>
        <end position="3076"/>
    </location>
</feature>
<feature type="compositionally biased region" description="Polar residues" evidence="4">
    <location>
        <begin position="2823"/>
        <end position="2838"/>
    </location>
</feature>
<feature type="compositionally biased region" description="Basic and acidic residues" evidence="4">
    <location>
        <begin position="3286"/>
        <end position="3295"/>
    </location>
</feature>
<evidence type="ECO:0000250" key="1">
    <source>
        <dbReference type="UniProtKB" id="A0A1S4NYE3"/>
    </source>
</evidence>
<evidence type="ECO:0000250" key="2">
    <source>
        <dbReference type="UniProtKB" id="Q3YL96"/>
    </source>
</evidence>
<evidence type="ECO:0000255" key="3"/>
<evidence type="ECO:0000256" key="4">
    <source>
        <dbReference type="SAM" id="MobiDB-lite"/>
    </source>
</evidence>
<evidence type="ECO:0000269" key="5">
    <source>
    </source>
</evidence>
<evidence type="ECO:0000303" key="6">
    <source>
    </source>
</evidence>
<evidence type="ECO:0000305" key="7"/>
<evidence type="ECO:0000305" key="8">
    <source>
    </source>
</evidence>
<accession>Q7CGD9</accession>
<keyword id="KW-0472">Membrane</keyword>
<keyword id="KW-1185">Reference proteome</keyword>
<keyword id="KW-1266">Target cell cytoplasm</keyword>
<keyword id="KW-0800">Toxin</keyword>
<keyword id="KW-0812">Transmembrane</keyword>
<keyword id="KW-1133">Transmembrane helix</keyword>
<keyword id="KW-0843">Virulence</keyword>
<reference key="1">
    <citation type="journal article" date="2001" name="Nature">
        <title>Genome sequence of Yersinia pestis, the causative agent of plague.</title>
        <authorList>
            <person name="Parkhill J."/>
            <person name="Wren B.W."/>
            <person name="Thomson N.R."/>
            <person name="Titball R.W."/>
            <person name="Holden M.T.G."/>
            <person name="Prentice M.B."/>
            <person name="Sebaihia M."/>
            <person name="James K.D."/>
            <person name="Churcher C.M."/>
            <person name="Mungall K.L."/>
            <person name="Baker S."/>
            <person name="Basham D."/>
            <person name="Bentley S.D."/>
            <person name="Brooks K."/>
            <person name="Cerdeno-Tarraga A.-M."/>
            <person name="Chillingworth T."/>
            <person name="Cronin A."/>
            <person name="Davies R.M."/>
            <person name="Davis P."/>
            <person name="Dougan G."/>
            <person name="Feltwell T."/>
            <person name="Hamlin N."/>
            <person name="Holroyd S."/>
            <person name="Jagels K."/>
            <person name="Karlyshev A.V."/>
            <person name="Leather S."/>
            <person name="Moule S."/>
            <person name="Oyston P.C.F."/>
            <person name="Quail M.A."/>
            <person name="Rutherford K.M."/>
            <person name="Simmonds M."/>
            <person name="Skelton J."/>
            <person name="Stevens K."/>
            <person name="Whitehead S."/>
            <person name="Barrell B.G."/>
        </authorList>
    </citation>
    <scope>NUCLEOTIDE SEQUENCE [LARGE SCALE GENOMIC DNA]</scope>
    <source>
        <strain>CO-92 / Biovar Orientalis</strain>
    </source>
</reference>
<reference key="2">
    <citation type="journal article" date="2002" name="J. Bacteriol.">
        <title>Genome sequence of Yersinia pestis KIM.</title>
        <authorList>
            <person name="Deng W."/>
            <person name="Burland V."/>
            <person name="Plunkett G. III"/>
            <person name="Boutin A."/>
            <person name="Mayhew G.F."/>
            <person name="Liss P."/>
            <person name="Perna N.T."/>
            <person name="Rose D.J."/>
            <person name="Mau B."/>
            <person name="Zhou S."/>
            <person name="Schwartz D.C."/>
            <person name="Fetherston J.D."/>
            <person name="Lindler L.E."/>
            <person name="Brubaker R.R."/>
            <person name="Plano G.V."/>
            <person name="Straley S.C."/>
            <person name="McDonough K.A."/>
            <person name="Nilles M.L."/>
            <person name="Matson J.S."/>
            <person name="Blattner F.R."/>
            <person name="Perry R.D."/>
        </authorList>
    </citation>
    <scope>NUCLEOTIDE SEQUENCE [LARGE SCALE GENOMIC DNA]</scope>
    <source>
        <strain>KIM10+ / Biovar Mediaevalis</strain>
    </source>
</reference>
<reference key="3">
    <citation type="journal article" date="2010" name="Nature">
        <title>A widespread family of polymorphic contact-dependent toxin delivery systems in bacteria.</title>
        <authorList>
            <person name="Aoki S.K."/>
            <person name="Diner E.J."/>
            <person name="de Roodenbeke C.T."/>
            <person name="Burgess B.R."/>
            <person name="Poole S.J."/>
            <person name="Braaten B.A."/>
            <person name="Jones A.M."/>
            <person name="Webb J.S."/>
            <person name="Hayes C.S."/>
            <person name="Cotter P.A."/>
            <person name="Low D.A."/>
        </authorList>
    </citation>
    <scope>FUNCTION</scope>
    <scope>STRAIN SPECIFICITY</scope>
    <scope>DOMAIN</scope>
    <source>
        <strain>CO-92 / Biovar Orientalis</strain>
    </source>
</reference>
<organism>
    <name type="scientific">Yersinia pestis</name>
    <dbReference type="NCBI Taxonomy" id="632"/>
    <lineage>
        <taxon>Bacteria</taxon>
        <taxon>Pseudomonadati</taxon>
        <taxon>Pseudomonadota</taxon>
        <taxon>Gammaproteobacteria</taxon>
        <taxon>Enterobacterales</taxon>
        <taxon>Yersiniaceae</taxon>
        <taxon>Yersinia</taxon>
    </lineage>
</organism>
<sequence>MNKNLYRIVFNQARGMLMVVADIAASGRAASSPSSGVGHTQRRRVSALSPLSFRLLIALGCISLSAQAAIVADGSAPGNQQPTIISSANGTPQVNIQTPSSGGVSRNAYRQFDVDNRGVILNNGRGVNQTQIAGLVDGNPWLARGEASVILNEVNSRDPSQLNGYIEVAGRKAQVVIANPAGITCEGCGFINANRATLTTGQAQLNNGQLTGYDVERGEIVIQGKGLDSRGQDHTDLIARSVKVNAGIWANELNITTGRNQVDAAHQNINTNAADGRHRPAVAVDVANLGGMYAGKIRLIGTETGVGVHNAGEIGASAGDIVITADGMLVNRGQISSAQQLAVNTPSGIENSGVLYGKGNTQLTTAGKLSNSGTVAAAGDTLIRAAEVNSSRNSVLGAGIKSDNSAITRGTLDIKARGQLTAQGKNISGTAQTFNANRIDLSGSQTQSGDLTFTTEGGDIDLTGANLFANRRLSVSTPSLLRTDKANLFAEQIALDAQALANVGGVITQTGLTDFNLNLPGDIDNRDGTLLTRGNFLLQAEHLTSNSQSLLGAGIQSDGKLAPRGDLNVTTRHALIAQGKTLTAGTLALSGSRLDLTDSLTQAKYMRLTATEGDIALTGATVMAANTLFADTRQILRSDKAYLTADQINLTAYSLSNVEGRVVQKGSGDFRLDLPGYLDNRGGVLLTKGNLALQAERLTSNSQSLLGAGIQADGSKASKGDLQANTTQALIAQGQNVAAGTMTLSGSRVDLTGSQTHASNITITARDGDVTTREATLITPGTLSMTAVANPEQTLNNRGGKLHADNIQLNLAKLENSNGEIAAATDLWLRLQSDFIHQAGARLTAGRDLLFNSRGALINQYKLEAGRDMQLTALSIRNTSADRNTNADNSSLLAGRGLSLSTDSLFNRGAIYTTGVGQFTVNGNTENIGEIYTEQQLTFTATGNLANRGVMQTRGEMQLSAQGDVNNSGMLYSAGDQMRLSIAGNLTNEGKLHVANGEMRLLTEGNLDNRGSLYGAGNSDITTQGNAVNTGSVYTQGALQWLTKGSVRNSASIAALGDLQLRANDLLSDNQSLMAAGLKADGSRSDSGNLAVSTEQALIAQGQNIAAGSLALAGSQIDLTGSQTQANAISLTAKSGDITLTSAVIKAATQLLVTQLAATRSSFIPPSSIPPSSTQSSSTQASASPSAWLRTDKASLIADQLTFDVQALSNLGGVIAQTGATDFNLNLPGYLDNRGGTILSKGNVAIQAQGLDSDSGSLLGAGVQSDGKLTNAGDLAVTVRQDLIAHGQSLAAGAMTLTGSGVDLTGSQTQARGITITANKGDVSTQRANILSLGSLAINAGANAGQTLNNQGGSLQANNIALNLGQLDNRTGKIAASQDLVLGLQSDFNILADSTLQAGRDFSFTTHGALTNDGQLLAGRKLSTRSNSLLNNGNIRAVQADLRASGALTNRGEILTRGGLSTDANTLFNSGTLIGATATLNARERITNSGPNALIGATDKNGTLALLAPVIENSDTVTRTDTAPTTTLLGMGKVILAGGQDNSGNYSSAAQVLNLSGLIESGNDLLVYAKTLTNRRQILTATTDFIVGDTETGAAYWTAENPDIPGGRYTQPPAGGPMNSDYIGTNYTSTVAYNRIDQISPEAQLLAGGNLTLQVGTLENNWSKVSAQGVIDLTGVTLQQDDWGSQQRLVEQTTSSGEYRYRTYKGKLWGIAWGPEMKLRLNNQYASSITAKTLTGSGTVINNTVINNGAAPGAIVAPRDRDSTGKNIAVEFNGIALTLPRSGLYQLKTDKGDYAPGPEAALSLANISPPSSLDATGPRGVPPPSDDLNRTGLVTPDRAVSGGYLVETHPAFASLNNWKGSDLYLQQLSSDPSVIHKRLGDNAYEQRLLRDQVLALTGRTVASDYRSEQAQFEQLFAAGVQYSKAFNLAPGTRLSAEQMATLTGNIVLMENRDVAGQTVLVPVVYLAGVKPGDLRANGALIAAENISLTEVQGFANAGAISASNNLQISMAKDITLNNRCGLLQAGNHLQLSTLNSDIDLTSARLNATNLQLDSGRDVILRTASDQYSSGNGAVQRTQTILGPLASLNISNNAVITAQRDFIQQGAGINIGKDLQVNTGGDWLLSTVQRSDQISAQYGGGSATSGSLRHLGSEVKVGGALSANVDNLTAVGARVNAGTIDVRAQNITLSAATDSLSVTGGSSSKRHTSSVNLYDETLLGSQLNATGDINLQTVNDITLSASAVQTDGALKLAAGGDVTLTSQTEQHDEQRNHTGTKKGLLSSTTTRSEEGRSQTLAVGSMLSAGSIDVSSQNIAVAGSSVVADKDIRLRAQENLTVSTAQQSESGSQLFEQKKSGLMSTGGIGVFIGTSRQKTTDQTQTVSHVGSTVGSLTGNVRLEAGNQLTLHGSDVVAGKDLALTGADVAISAAENSRSQQYTAESKQRGLTVALSGPVGSAVNTAVTTAKAAREENTGRLAGLQGVKAALSGVQAVQAGQLVQAQGGGITEMVGVSVSLGSQKSSSQQQQEQTQVSGSALTAGNNLSIKASGSDILIAGSQLKAGGDTRLDAARDVQLLGAANRQKTDGSNSSRGGSVGVSVGGSGLSVFANANKGQGNERGDGTFWTETTVDSGGMFSLRSGRDTALTGAQVSAETVKADVGRNLTLQSQQDRDNYDAKQSRASGGISVPVAGGGAAVNLSMSRDRLSSQYDSVQAQTGIFAGSGGVDIRVGEHTQLDGAVIASTAAADKNTLDTGTLGFSDIKNKAVFTVEHQGGSLSTGGPVGSDLLSNLGGMVLAGLGNGGYAEGTTQAAVSEGTITVRDTENQQQNVDDLSRDTGNANGSIGPIFDKEKEQNRLKEVQLIGEIGGQALDIASTQGKIIATHAANDKMKAVKPEDIAAAEKQWEKAHPGKAATAEDINQQIYQTAYNQAFNESGFGTGGPVQRGMQAATAAVQGLAGGNMGAALTGASAPYLAGVIKQSTGDNPAANTMAHAVLGAVTAYASGNNALAGAAGAATAELMAPTIISALGWDKNTLTEGQKQAVSALSTLAAGLAGGLTGDSTADALAGGQAGKNAVENNLLGGNEFTHTQFVQKHGADVLSCADNPSNAACQRGIAENKAYIAALATGSVALLPGSSQAMWALGAGTNAGMQYADNGKINPVNSVAAGWINVITMGQGWKGTIAWNAAGGALINAINGGDPLTGAITNGTGAGFGYGVGNYVVKPAANTLGKWITGGWNPKFDPNLLKYAEVKGQLGISKEMLPSKIPSAVGNAGGSLSSEFGSSLIQQKKDAMEDSK</sequence>
<gene>
    <name evidence="6" type="primary">cdiA</name>
    <name type="ordered locus">y3579</name>
    <name type="ordered locus">YPO0599</name>
</gene>
<comment type="function">
    <text evidence="5">Toxic component of a toxin-immunity protein module, which functions as a cellular contact-dependent growth inhibition (CDI) system. CDI modules allow bacteria to communicate with and inhibit the growth of closely related neighboring bacteria in a contact-dependent fashion. CDI is neutralized by its cognate immunity protein CdiI, but not by non-cognate CdiI from other bacteria.</text>
</comment>
<comment type="function">
    <text evidence="7">The CdiA protein is thought to be exported from the cell through the central lumen of CdiB, the other half of its two-partner system (TPS). The TPS domain probably remains associated with CdiB while the FHA-1 domain forms an extended filament with the receptor-binding domain (RBD) at its extremity; in the secretion arrested state the C-terminus of the RBD and YP domains form a hairpin-like structure as the FHA-2, PT and CT domains are periplasmic. The YP domain is probably responsible for this arrest at the point where it re-enters the host cell periplasm. Upon binding to a target cell outer membrane receptor a signal is transmitted to activate secretion. The filament elongates slightly, the rest of CdiA is secreted and the FHA-2 domain becomes stably associated with the target cell's outer membrane where it facilitates entry of the toxic CT domain into the target cell periplasm. From there the toxic CT domain is cleaved and gains access to the target cell cytoplasm via an inner membrane protein.</text>
</comment>
<comment type="subunit">
    <text evidence="8">Probably interacts with cognate immunity protein CdiI.</text>
</comment>
<comment type="subcellular location">
    <subcellularLocation>
        <location evidence="3">Membrane</location>
        <topology evidence="3">Single-pass membrane protein</topology>
    </subcellularLocation>
    <subcellularLocation>
        <location evidence="7">Target cell</location>
        <location evidence="7">Target cell cytoplasm</location>
    </subcellularLocation>
    <text evidence="7">Secreted to the cell surface by CdiB, its two partner secretion pathway (TPS) partner (Probable).</text>
</comment>
<comment type="domain">
    <text evidence="5">The CDI activity resides in the approximately 220 residue C-terminal (CT) domain; exchanging the C-terminal (CT) domain and cdiI gene between different strains confers resistance within cognate but not non-cognate systems (i.e. CdiI-CO92 neutralizes CdiA-CT from strain CO92 but not CdiA-CT from E.coli strains 536 / UPEC, EC93 or from D.dadantii strain 3937).</text>
</comment>
<comment type="similarity">
    <text evidence="7">In the N-terminal section; belongs to the CdiA toxin family.</text>
</comment>
<dbReference type="EMBL" id="AE009952">
    <property type="protein sequence ID" value="AAM87127.1"/>
    <property type="molecule type" value="Genomic_DNA"/>
</dbReference>
<dbReference type="EMBL" id="AL590842">
    <property type="protein sequence ID" value="CAL19279.1"/>
    <property type="molecule type" value="Genomic_DNA"/>
</dbReference>
<dbReference type="PIR" id="AE0074">
    <property type="entry name" value="AE0074"/>
</dbReference>
<dbReference type="RefSeq" id="WP_002214945.1">
    <property type="nucleotide sequence ID" value="NZ_UAVH01000008.1"/>
</dbReference>
<dbReference type="RefSeq" id="YP_002345671.1">
    <property type="nucleotide sequence ID" value="NC_003143.1"/>
</dbReference>
<dbReference type="SMR" id="Q7CGD9"/>
<dbReference type="IntAct" id="Q7CGD9">
    <property type="interactions" value="3"/>
</dbReference>
<dbReference type="STRING" id="214092.YPO0599"/>
<dbReference type="PaxDb" id="214092-YPO0599"/>
<dbReference type="GeneID" id="57974018"/>
<dbReference type="KEGG" id="ype:YPO0599"/>
<dbReference type="KEGG" id="ypk:y3579"/>
<dbReference type="PATRIC" id="fig|214092.21.peg.855"/>
<dbReference type="eggNOG" id="COG3210">
    <property type="taxonomic scope" value="Bacteria"/>
</dbReference>
<dbReference type="HOGENOM" id="CLU_000043_2_1_6"/>
<dbReference type="OMA" id="CKRRAVH"/>
<dbReference type="Proteomes" id="UP000000815">
    <property type="component" value="Chromosome"/>
</dbReference>
<dbReference type="Proteomes" id="UP000002490">
    <property type="component" value="Chromosome"/>
</dbReference>
<dbReference type="GO" id="GO:0016020">
    <property type="term" value="C:membrane"/>
    <property type="evidence" value="ECO:0007669"/>
    <property type="project" value="UniProtKB-SubCell"/>
</dbReference>
<dbReference type="GO" id="GO:0003824">
    <property type="term" value="F:catalytic activity"/>
    <property type="evidence" value="ECO:0007669"/>
    <property type="project" value="UniProtKB-ARBA"/>
</dbReference>
<dbReference type="GO" id="GO:0090729">
    <property type="term" value="F:toxin activity"/>
    <property type="evidence" value="ECO:0007669"/>
    <property type="project" value="UniProtKB-KW"/>
</dbReference>
<dbReference type="Gene3D" id="2.160.20.10">
    <property type="entry name" value="Single-stranded right-handed beta-helix, Pectin lyase-like"/>
    <property type="match status" value="1"/>
</dbReference>
<dbReference type="InterPro" id="IPR010069">
    <property type="entry name" value="CdiA_FHA1_rpt"/>
</dbReference>
<dbReference type="InterPro" id="IPR024973">
    <property type="entry name" value="ESPR"/>
</dbReference>
<dbReference type="InterPro" id="IPR008638">
    <property type="entry name" value="FhaB/CdiA-like_TPS"/>
</dbReference>
<dbReference type="InterPro" id="IPR008619">
    <property type="entry name" value="Filamentous_hemagglutn_rpt"/>
</dbReference>
<dbReference type="InterPro" id="IPR025157">
    <property type="entry name" value="Hemagglutinin_rpt"/>
</dbReference>
<dbReference type="InterPro" id="IPR012334">
    <property type="entry name" value="Pectin_lyas_fold"/>
</dbReference>
<dbReference type="InterPro" id="IPR011050">
    <property type="entry name" value="Pectin_lyase_fold/virulence"/>
</dbReference>
<dbReference type="InterPro" id="IPR006914">
    <property type="entry name" value="VENN_dom"/>
</dbReference>
<dbReference type="NCBIfam" id="TIGR01901">
    <property type="entry name" value="adhes_NPXG"/>
    <property type="match status" value="1"/>
</dbReference>
<dbReference type="NCBIfam" id="TIGR01731">
    <property type="entry name" value="fil_hemag_20aa"/>
    <property type="match status" value="14"/>
</dbReference>
<dbReference type="Pfam" id="PF13018">
    <property type="entry name" value="ESPR"/>
    <property type="match status" value="1"/>
</dbReference>
<dbReference type="Pfam" id="PF05594">
    <property type="entry name" value="Fil_haemagg"/>
    <property type="match status" value="12"/>
</dbReference>
<dbReference type="Pfam" id="PF13332">
    <property type="entry name" value="Fil_haemagg_2"/>
    <property type="match status" value="3"/>
</dbReference>
<dbReference type="Pfam" id="PF04829">
    <property type="entry name" value="PT-VENN"/>
    <property type="match status" value="1"/>
</dbReference>
<dbReference type="Pfam" id="PF05860">
    <property type="entry name" value="TPS"/>
    <property type="match status" value="1"/>
</dbReference>
<dbReference type="SMART" id="SM00912">
    <property type="entry name" value="Haemagg_act"/>
    <property type="match status" value="1"/>
</dbReference>
<dbReference type="SUPFAM" id="SSF51126">
    <property type="entry name" value="Pectin lyase-like"/>
    <property type="match status" value="1"/>
</dbReference>
<proteinExistence type="inferred from homology"/>
<protein>
    <recommendedName>
        <fullName evidence="8">Toxin CdiA</fullName>
    </recommendedName>
</protein>